<gene>
    <name evidence="4" type="primary">nsrQ</name>
    <name type="ORF">P174DRAFT_407796</name>
</gene>
<reference key="1">
    <citation type="journal article" date="2018" name="Proc. Natl. Acad. Sci. U.S.A.">
        <title>Linking secondary metabolites to gene clusters through genome sequencing of six diverse Aspergillus species.</title>
        <authorList>
            <person name="Kjaerboelling I."/>
            <person name="Vesth T.C."/>
            <person name="Frisvad J.C."/>
            <person name="Nybo J.L."/>
            <person name="Theobald S."/>
            <person name="Kuo A."/>
            <person name="Bowyer P."/>
            <person name="Matsuda Y."/>
            <person name="Mondo S."/>
            <person name="Lyhne E.K."/>
            <person name="Kogle M.E."/>
            <person name="Clum A."/>
            <person name="Lipzen A."/>
            <person name="Salamov A."/>
            <person name="Ngan C.Y."/>
            <person name="Daum C."/>
            <person name="Chiniquy J."/>
            <person name="Barry K."/>
            <person name="LaButti K."/>
            <person name="Haridas S."/>
            <person name="Simmons B.A."/>
            <person name="Magnuson J.K."/>
            <person name="Mortensen U.H."/>
            <person name="Larsen T.O."/>
            <person name="Grigoriev I.V."/>
            <person name="Baker S.E."/>
            <person name="Andersen M.R."/>
        </authorList>
    </citation>
    <scope>NUCLEOTIDE SEQUENCE [LARGE SCALE GENOMIC DNA]</scope>
    <source>
        <strain>IBT 16806</strain>
    </source>
</reference>
<reference key="2">
    <citation type="journal article" date="2018" name="Org. Lett.">
        <title>Genetic characterization of neosartorin biosynthesis provides insight into heterodimeric natural product generation.</title>
        <authorList>
            <person name="Matsuda Y."/>
            <person name="Gotfredsen C.H."/>
            <person name="Larsen T.O."/>
        </authorList>
    </citation>
    <scope>FUNCTION</scope>
    <scope>PATHWAY</scope>
</reference>
<reference key="3">
    <citation type="journal article" date="2020" name="Org. Lett.">
        <title>Unraveling the fungal strategy for tetrahydroxanthone biosynthesis and diversification.</title>
        <authorList>
            <person name="Wei X."/>
            <person name="Matsuda Y."/>
        </authorList>
    </citation>
    <scope>FUNCTION</scope>
    <scope>CATALYTIC ACTIVITY</scope>
    <scope>MUTAGENESIS OF GLU-121</scope>
    <scope>PATHWAY</scope>
</reference>
<reference key="4">
    <citation type="journal article" date="2021" name="J. Nat. Prod.">
        <title>Heterologous biosynthesis of tetrahydroxanthone dimers: determination of key factors for selective or divergent synthesis.</title>
        <authorList>
            <person name="Wei X."/>
            <person name="Chen X."/>
            <person name="Chen L."/>
            <person name="Yan D."/>
            <person name="Wang W.G."/>
            <person name="Matsuda Y."/>
        </authorList>
    </citation>
    <scope>FUNCTION</scope>
    <scope>CATALYTIC ACTIVITY</scope>
    <scope>PATHWAY</scope>
</reference>
<dbReference type="EC" id="1.-.-.-" evidence="3"/>
<dbReference type="EMBL" id="MSZS01000005">
    <property type="protein sequence ID" value="PKX92293.1"/>
    <property type="molecule type" value="Genomic_DNA"/>
</dbReference>
<dbReference type="PDB" id="7F0O">
    <property type="method" value="X-ray"/>
    <property type="resolution" value="2.20 A"/>
    <property type="chains" value="A/B=1-151"/>
</dbReference>
<dbReference type="PDB" id="7F0Y">
    <property type="method" value="X-ray"/>
    <property type="resolution" value="1.60 A"/>
    <property type="chains" value="A/B=1-151"/>
</dbReference>
<dbReference type="PDB" id="7F0Z">
    <property type="method" value="X-ray"/>
    <property type="resolution" value="2.00 A"/>
    <property type="chains" value="A/B=1-151"/>
</dbReference>
<dbReference type="PDB" id="7F10">
    <property type="method" value="X-ray"/>
    <property type="resolution" value="1.65 A"/>
    <property type="chains" value="A/B=1-151"/>
</dbReference>
<dbReference type="PDB" id="7F11">
    <property type="method" value="X-ray"/>
    <property type="resolution" value="1.60 A"/>
    <property type="chains" value="A/B=1-151"/>
</dbReference>
<dbReference type="PDBsum" id="7F0O"/>
<dbReference type="PDBsum" id="7F0Y"/>
<dbReference type="PDBsum" id="7F0Z"/>
<dbReference type="PDBsum" id="7F10"/>
<dbReference type="PDBsum" id="7F11"/>
<dbReference type="SMR" id="A0A2I1C3W8"/>
<dbReference type="VEuPathDB" id="FungiDB:P174DRAFT_407796"/>
<dbReference type="OMA" id="KHISYGD"/>
<dbReference type="OrthoDB" id="3758478at2759"/>
<dbReference type="Proteomes" id="UP000234474">
    <property type="component" value="Unassembled WGS sequence"/>
</dbReference>
<dbReference type="GO" id="GO:0004497">
    <property type="term" value="F:monooxygenase activity"/>
    <property type="evidence" value="ECO:0007669"/>
    <property type="project" value="UniProtKB-KW"/>
</dbReference>
<dbReference type="Gene3D" id="3.10.450.50">
    <property type="match status" value="1"/>
</dbReference>
<dbReference type="InterPro" id="IPR050977">
    <property type="entry name" value="Fungal_Meroterpenoid_Isomerase"/>
</dbReference>
<dbReference type="InterPro" id="IPR032710">
    <property type="entry name" value="NTF2-like_dom_sf"/>
</dbReference>
<dbReference type="PANTHER" id="PTHR39598:SF1">
    <property type="entry name" value="AUSTINOID BIOSYNTHESIS CLUSTERS PROTEIN F-RELATED"/>
    <property type="match status" value="1"/>
</dbReference>
<dbReference type="PANTHER" id="PTHR39598">
    <property type="entry name" value="AUSTINOL SYNTHESIS PROTEIN F-RELATED"/>
    <property type="match status" value="1"/>
</dbReference>
<dbReference type="SUPFAM" id="SSF54427">
    <property type="entry name" value="NTF2-like"/>
    <property type="match status" value="1"/>
</dbReference>
<sequence>MPAPAEVQAATLEKFIQGWAGWTPDGFLANWSEDCTQKTLPFSSGVPLRTRADTEKLFPVLMSLMSNFTLDIHNVVHDAPQGKAVIYALTKADTPFGPYRNEHAIFLWFNEIGDRVQKIEEMFDAVVMQEFLPKLDKYVADNKMQLGAKFS</sequence>
<keyword id="KW-0002">3D-structure</keyword>
<keyword id="KW-0503">Monooxygenase</keyword>
<keyword id="KW-0560">Oxidoreductase</keyword>
<keyword id="KW-1185">Reference proteome</keyword>
<accession>A0A2I1C3W8</accession>
<evidence type="ECO:0000269" key="1">
    <source>
    </source>
</evidence>
<evidence type="ECO:0000269" key="2">
    <source>
    </source>
</evidence>
<evidence type="ECO:0000269" key="3">
    <source>
    </source>
</evidence>
<evidence type="ECO:0000303" key="4">
    <source>
    </source>
</evidence>
<evidence type="ECO:0000305" key="5"/>
<evidence type="ECO:0007829" key="6">
    <source>
        <dbReference type="PDB" id="7F0Y"/>
    </source>
</evidence>
<proteinExistence type="evidence at protein level"/>
<feature type="chain" id="PRO_0000453492" description="Monooxygenase nsrQ">
    <location>
        <begin position="1"/>
        <end position="151"/>
    </location>
</feature>
<feature type="mutagenesis site" description="Impairs the production of neosartorin." evidence="2">
    <original>E</original>
    <variation>A</variation>
    <variation>Q</variation>
    <variation>D</variation>
    <location>
        <position position="121"/>
    </location>
</feature>
<feature type="helix" evidence="6">
    <location>
        <begin position="5"/>
        <end position="21"/>
    </location>
</feature>
<feature type="helix" evidence="6">
    <location>
        <begin position="24"/>
        <end position="28"/>
    </location>
</feature>
<feature type="strand" evidence="6">
    <location>
        <begin position="31"/>
        <end position="40"/>
    </location>
</feature>
<feature type="helix" evidence="6">
    <location>
        <begin position="42"/>
        <end position="44"/>
    </location>
</feature>
<feature type="helix" evidence="6">
    <location>
        <begin position="51"/>
        <end position="64"/>
    </location>
</feature>
<feature type="strand" evidence="6">
    <location>
        <begin position="65"/>
        <end position="78"/>
    </location>
</feature>
<feature type="turn" evidence="6">
    <location>
        <begin position="79"/>
        <end position="82"/>
    </location>
</feature>
<feature type="strand" evidence="6">
    <location>
        <begin position="83"/>
        <end position="94"/>
    </location>
</feature>
<feature type="strand" evidence="6">
    <location>
        <begin position="97"/>
        <end position="109"/>
    </location>
</feature>
<feature type="strand" evidence="6">
    <location>
        <begin position="111"/>
        <end position="123"/>
    </location>
</feature>
<feature type="helix" evidence="6">
    <location>
        <begin position="126"/>
        <end position="129"/>
    </location>
</feature>
<feature type="helix" evidence="6">
    <location>
        <begin position="131"/>
        <end position="140"/>
    </location>
</feature>
<protein>
    <recommendedName>
        <fullName evidence="4">Monooxygenase nsrQ</fullName>
        <ecNumber evidence="3">1.-.-.-</ecNumber>
    </recommendedName>
    <alternativeName>
        <fullName evidence="4">Neosartorin biosynthesis cluster protein Q</fullName>
    </alternativeName>
</protein>
<organism>
    <name type="scientific">Aspergillus novofumigatus (strain IBT 16806)</name>
    <dbReference type="NCBI Taxonomy" id="1392255"/>
    <lineage>
        <taxon>Eukaryota</taxon>
        <taxon>Fungi</taxon>
        <taxon>Dikarya</taxon>
        <taxon>Ascomycota</taxon>
        <taxon>Pezizomycotina</taxon>
        <taxon>Eurotiomycetes</taxon>
        <taxon>Eurotiomycetidae</taxon>
        <taxon>Eurotiales</taxon>
        <taxon>Aspergillaceae</taxon>
        <taxon>Aspergillus</taxon>
        <taxon>Aspergillus subgen. Fumigati</taxon>
    </lineage>
</organism>
<comment type="function">
    <text evidence="1 2 3">Monooxygenase; part of the gene cluster that mediates the biosynthesis of the tetrahydroxanthone dimer neosartorin, which exhibits antibacterial activity (PubMed:30394754, PubMed:32105084, PubMed:33891392). The two different monomeric units appear to be synthesized by the same set of enzymes, among which the Baeyer-Villiger monooxygenase nsrF is the key enzyme for the divergence of the biosynthetic routes (PubMed:32105084). The pathway begins with the synthesis of atrochrysone thioester by the polyketide synthase nsrB (PubMed:32105084). The atrochrysone carboxyl ACP thioesterase nsrC then breaks the thioester bond and releases the atrochrysone carboxylic acid from AacuL (PubMed:32105084). Atrochrysone carboxylic acid is decarboxylated by the decarboxylase nsrE, and oxidized by the anthrone oxygenase nsrD to yield emodin (PubMed:32105084). Emodin is then reduced to emodin hydroquinone by the oxidoreductase nsrR (PubMed:32105084). A-ring reduction by the short chain dehydrogenase nsrJ, dehydration by the scytalone dehydratase-like protein nsrI and probable spontaneous re-oxidation, results in overall deoxygenation to chrysophanol (PubMed:32105084). The Baeyer-Villiger monooxygenase nsrF accepts chrysophanol as a substrate to insert one oxygen atom at two different positions to yield the precursors of both monomric units (PubMed:30394754, PubMed:32105084, PubMed:33891392). NsrF is promiscuous/flexible in interacting with the 2 (non methylated and methylated) aromatic rings of chrysophanol, thus diverging the biosynthetic pathway at this point (PubMed:30394754, PubMed:32105084, PubMed:33891392). After the hydrolysis of the lactones, methylesterification by the methyltransferase nsrG yields respectively moniliphenone and 2,2',6'-trihydroxy-4-methyl-6-methoxya-cyldiphenylmethanone (PubMed:30394754, PubMed:32105084). The next steps are the hydroxylation by the FAD-dependent monooxygenase nsrK, followed by isomerization by the monooxygenase nsrQ (PubMed:32105084). The short chain dehydrogenase/reductase nsrO then catalyzes the C-5 ketoreduction to give the xanthone skeleton of blennolide C and 5-acetylblennolide A (PubMed:32105084). The acetyltransferase nsrL has a strict substrate specificity and uses only blennolide A but not blennolide C to yield 5-acetylblennolide A as the single-acetylated product (PubMed:30394754). In the final step of the biosynthesis, the heterodimerization of the 2 xanthones, blennolide C and 5-acetylblennolide A, is catalyzed by the cytochrome P450 monooxygenase nsrP (PubMed:30394754). NsrP can utilize at least three different xanthones as its substrates to perform the dimerization reaction (PubMed:30394754).</text>
</comment>
<comment type="pathway">
    <text evidence="3">Secondary metabolite biosynthesis.</text>
</comment>
<comment type="similarity">
    <text evidence="5">Belongs to the avfA family.</text>
</comment>
<name>NSRQ_ASPN1</name>